<keyword id="KW-1185">Reference proteome</keyword>
<keyword id="KW-0687">Ribonucleoprotein</keyword>
<keyword id="KW-0689">Ribosomal protein</keyword>
<keyword id="KW-0694">RNA-binding</keyword>
<keyword id="KW-0699">rRNA-binding</keyword>
<name>RS15_RENSM</name>
<sequence length="89" mass="10317">MALEAAVKQEIIKEYATGEADTGSPEVQIAMLSKRILDLTEHLKVHKHDHHTRRGLMALVGRRKRLLTYLKDTDITRYRALIERLGLRR</sequence>
<reference key="1">
    <citation type="journal article" date="2008" name="J. Bacteriol.">
        <title>Genome sequence of the fish pathogen Renibacterium salmoninarum suggests reductive evolution away from an environmental Arthrobacter ancestor.</title>
        <authorList>
            <person name="Wiens G.D."/>
            <person name="Rockey D.D."/>
            <person name="Wu Z."/>
            <person name="Chang J."/>
            <person name="Levy R."/>
            <person name="Crane S."/>
            <person name="Chen D.S."/>
            <person name="Capri G.R."/>
            <person name="Burnett J.R."/>
            <person name="Sudheesh P.S."/>
            <person name="Schipma M.J."/>
            <person name="Burd H."/>
            <person name="Bhattacharyya A."/>
            <person name="Rhodes L.D."/>
            <person name="Kaul R."/>
            <person name="Strom M.S."/>
        </authorList>
    </citation>
    <scope>NUCLEOTIDE SEQUENCE [LARGE SCALE GENOMIC DNA]</scope>
    <source>
        <strain>ATCC 33209 / DSM 20767 / JCM 11484 / NBRC 15589 / NCIMB 2235</strain>
    </source>
</reference>
<accession>A9WPX3</accession>
<evidence type="ECO:0000255" key="1">
    <source>
        <dbReference type="HAMAP-Rule" id="MF_01343"/>
    </source>
</evidence>
<evidence type="ECO:0000305" key="2"/>
<gene>
    <name evidence="1" type="primary">rpsO</name>
    <name type="ordered locus">RSal33209_0671</name>
</gene>
<feature type="chain" id="PRO_1000086813" description="Small ribosomal subunit protein uS15">
    <location>
        <begin position="1"/>
        <end position="89"/>
    </location>
</feature>
<dbReference type="EMBL" id="CP000910">
    <property type="protein sequence ID" value="ABY22418.1"/>
    <property type="molecule type" value="Genomic_DNA"/>
</dbReference>
<dbReference type="RefSeq" id="WP_012244118.1">
    <property type="nucleotide sequence ID" value="NC_010168.1"/>
</dbReference>
<dbReference type="SMR" id="A9WPX3"/>
<dbReference type="STRING" id="288705.RSal33209_0671"/>
<dbReference type="KEGG" id="rsa:RSal33209_0671"/>
<dbReference type="eggNOG" id="COG0184">
    <property type="taxonomic scope" value="Bacteria"/>
</dbReference>
<dbReference type="HOGENOM" id="CLU_148518_0_0_11"/>
<dbReference type="Proteomes" id="UP000002007">
    <property type="component" value="Chromosome"/>
</dbReference>
<dbReference type="GO" id="GO:0022627">
    <property type="term" value="C:cytosolic small ribosomal subunit"/>
    <property type="evidence" value="ECO:0007669"/>
    <property type="project" value="TreeGrafter"/>
</dbReference>
<dbReference type="GO" id="GO:0019843">
    <property type="term" value="F:rRNA binding"/>
    <property type="evidence" value="ECO:0007669"/>
    <property type="project" value="UniProtKB-UniRule"/>
</dbReference>
<dbReference type="GO" id="GO:0003735">
    <property type="term" value="F:structural constituent of ribosome"/>
    <property type="evidence" value="ECO:0007669"/>
    <property type="project" value="InterPro"/>
</dbReference>
<dbReference type="GO" id="GO:0006412">
    <property type="term" value="P:translation"/>
    <property type="evidence" value="ECO:0007669"/>
    <property type="project" value="UniProtKB-UniRule"/>
</dbReference>
<dbReference type="CDD" id="cd00353">
    <property type="entry name" value="Ribosomal_S15p_S13e"/>
    <property type="match status" value="1"/>
</dbReference>
<dbReference type="FunFam" id="1.10.287.10:FF:000002">
    <property type="entry name" value="30S ribosomal protein S15"/>
    <property type="match status" value="1"/>
</dbReference>
<dbReference type="Gene3D" id="6.10.250.3130">
    <property type="match status" value="1"/>
</dbReference>
<dbReference type="Gene3D" id="1.10.287.10">
    <property type="entry name" value="S15/NS1, RNA-binding"/>
    <property type="match status" value="1"/>
</dbReference>
<dbReference type="HAMAP" id="MF_01343_B">
    <property type="entry name" value="Ribosomal_uS15_B"/>
    <property type="match status" value="1"/>
</dbReference>
<dbReference type="InterPro" id="IPR000589">
    <property type="entry name" value="Ribosomal_uS15"/>
</dbReference>
<dbReference type="InterPro" id="IPR005290">
    <property type="entry name" value="Ribosomal_uS15_bac-type"/>
</dbReference>
<dbReference type="InterPro" id="IPR009068">
    <property type="entry name" value="uS15_NS1_RNA-bd_sf"/>
</dbReference>
<dbReference type="NCBIfam" id="TIGR00952">
    <property type="entry name" value="S15_bact"/>
    <property type="match status" value="1"/>
</dbReference>
<dbReference type="PANTHER" id="PTHR23321">
    <property type="entry name" value="RIBOSOMAL PROTEIN S15, BACTERIAL AND ORGANELLAR"/>
    <property type="match status" value="1"/>
</dbReference>
<dbReference type="PANTHER" id="PTHR23321:SF26">
    <property type="entry name" value="SMALL RIBOSOMAL SUBUNIT PROTEIN US15M"/>
    <property type="match status" value="1"/>
</dbReference>
<dbReference type="Pfam" id="PF00312">
    <property type="entry name" value="Ribosomal_S15"/>
    <property type="match status" value="1"/>
</dbReference>
<dbReference type="SMART" id="SM01387">
    <property type="entry name" value="Ribosomal_S15"/>
    <property type="match status" value="1"/>
</dbReference>
<dbReference type="SUPFAM" id="SSF47060">
    <property type="entry name" value="S15/NS1 RNA-binding domain"/>
    <property type="match status" value="1"/>
</dbReference>
<dbReference type="PROSITE" id="PS00362">
    <property type="entry name" value="RIBOSOMAL_S15"/>
    <property type="match status" value="1"/>
</dbReference>
<protein>
    <recommendedName>
        <fullName evidence="1">Small ribosomal subunit protein uS15</fullName>
    </recommendedName>
    <alternativeName>
        <fullName evidence="2">30S ribosomal protein S15</fullName>
    </alternativeName>
</protein>
<proteinExistence type="inferred from homology"/>
<organism>
    <name type="scientific">Renibacterium salmoninarum (strain ATCC 33209 / DSM 20767 / JCM 11484 / NBRC 15589 / NCIMB 2235)</name>
    <dbReference type="NCBI Taxonomy" id="288705"/>
    <lineage>
        <taxon>Bacteria</taxon>
        <taxon>Bacillati</taxon>
        <taxon>Actinomycetota</taxon>
        <taxon>Actinomycetes</taxon>
        <taxon>Micrococcales</taxon>
        <taxon>Micrococcaceae</taxon>
        <taxon>Renibacterium</taxon>
    </lineage>
</organism>
<comment type="function">
    <text evidence="1">One of the primary rRNA binding proteins, it binds directly to 16S rRNA where it helps nucleate assembly of the platform of the 30S subunit by binding and bridging several RNA helices of the 16S rRNA.</text>
</comment>
<comment type="function">
    <text evidence="1">Forms an intersubunit bridge (bridge B4) with the 23S rRNA of the 50S subunit in the ribosome.</text>
</comment>
<comment type="subunit">
    <text evidence="1">Part of the 30S ribosomal subunit. Forms a bridge to the 50S subunit in the 70S ribosome, contacting the 23S rRNA.</text>
</comment>
<comment type="similarity">
    <text evidence="1">Belongs to the universal ribosomal protein uS15 family.</text>
</comment>